<name>IF2_KLEP7</name>
<reference key="1">
    <citation type="submission" date="2006-09" db="EMBL/GenBank/DDBJ databases">
        <authorList>
            <consortium name="The Klebsiella pneumonia Genome Sequencing Project"/>
            <person name="McClelland M."/>
            <person name="Sanderson E.K."/>
            <person name="Spieth J."/>
            <person name="Clifton W.S."/>
            <person name="Latreille P."/>
            <person name="Sabo A."/>
            <person name="Pepin K."/>
            <person name="Bhonagiri V."/>
            <person name="Porwollik S."/>
            <person name="Ali J."/>
            <person name="Wilson R.K."/>
        </authorList>
    </citation>
    <scope>NUCLEOTIDE SEQUENCE [LARGE SCALE GENOMIC DNA]</scope>
    <source>
        <strain>ATCC 700721 / MGH 78578</strain>
    </source>
</reference>
<proteinExistence type="inferred from homology"/>
<keyword id="KW-0963">Cytoplasm</keyword>
<keyword id="KW-0342">GTP-binding</keyword>
<keyword id="KW-0396">Initiation factor</keyword>
<keyword id="KW-0547">Nucleotide-binding</keyword>
<keyword id="KW-0648">Protein biosynthesis</keyword>
<feature type="chain" id="PRO_1000008257" description="Translation initiation factor IF-2">
    <location>
        <begin position="1"/>
        <end position="896"/>
    </location>
</feature>
<feature type="domain" description="tr-type G">
    <location>
        <begin position="395"/>
        <end position="564"/>
    </location>
</feature>
<feature type="region of interest" description="Disordered" evidence="3">
    <location>
        <begin position="93"/>
        <end position="307"/>
    </location>
</feature>
<feature type="region of interest" description="G1" evidence="1">
    <location>
        <begin position="404"/>
        <end position="411"/>
    </location>
</feature>
<feature type="region of interest" description="G2" evidence="1">
    <location>
        <begin position="429"/>
        <end position="433"/>
    </location>
</feature>
<feature type="region of interest" description="G3" evidence="1">
    <location>
        <begin position="450"/>
        <end position="453"/>
    </location>
</feature>
<feature type="region of interest" description="G4" evidence="1">
    <location>
        <begin position="504"/>
        <end position="507"/>
    </location>
</feature>
<feature type="region of interest" description="G5" evidence="1">
    <location>
        <begin position="540"/>
        <end position="542"/>
    </location>
</feature>
<feature type="compositionally biased region" description="Basic and acidic residues" evidence="3">
    <location>
        <begin position="93"/>
        <end position="219"/>
    </location>
</feature>
<feature type="compositionally biased region" description="Basic residues" evidence="3">
    <location>
        <begin position="256"/>
        <end position="271"/>
    </location>
</feature>
<feature type="compositionally biased region" description="Basic and acidic residues" evidence="3">
    <location>
        <begin position="272"/>
        <end position="285"/>
    </location>
</feature>
<feature type="binding site" evidence="2">
    <location>
        <begin position="404"/>
        <end position="411"/>
    </location>
    <ligand>
        <name>GTP</name>
        <dbReference type="ChEBI" id="CHEBI:37565"/>
    </ligand>
</feature>
<feature type="binding site" evidence="2">
    <location>
        <begin position="450"/>
        <end position="454"/>
    </location>
    <ligand>
        <name>GTP</name>
        <dbReference type="ChEBI" id="CHEBI:37565"/>
    </ligand>
</feature>
<feature type="binding site" evidence="2">
    <location>
        <begin position="504"/>
        <end position="507"/>
    </location>
    <ligand>
        <name>GTP</name>
        <dbReference type="ChEBI" id="CHEBI:37565"/>
    </ligand>
</feature>
<gene>
    <name evidence="2" type="primary">infB</name>
    <name type="ordered locus">KPN78578_35470</name>
    <name type="ORF">KPN_03576</name>
</gene>
<comment type="function">
    <text evidence="2">One of the essential components for the initiation of protein synthesis. Protects formylmethionyl-tRNA from spontaneous hydrolysis and promotes its binding to the 30S ribosomal subunits. Also involved in the hydrolysis of GTP during the formation of the 70S ribosomal complex.</text>
</comment>
<comment type="subcellular location">
    <subcellularLocation>
        <location evidence="2">Cytoplasm</location>
    </subcellularLocation>
</comment>
<comment type="similarity">
    <text evidence="2">Belongs to the TRAFAC class translation factor GTPase superfamily. Classic translation factor GTPase family. IF-2 subfamily.</text>
</comment>
<organism>
    <name type="scientific">Klebsiella pneumoniae subsp. pneumoniae (strain ATCC 700721 / MGH 78578)</name>
    <dbReference type="NCBI Taxonomy" id="272620"/>
    <lineage>
        <taxon>Bacteria</taxon>
        <taxon>Pseudomonadati</taxon>
        <taxon>Pseudomonadota</taxon>
        <taxon>Gammaproteobacteria</taxon>
        <taxon>Enterobacterales</taxon>
        <taxon>Enterobacteriaceae</taxon>
        <taxon>Klebsiella/Raoultella group</taxon>
        <taxon>Klebsiella</taxon>
        <taxon>Klebsiella pneumoniae complex</taxon>
    </lineage>
</organism>
<evidence type="ECO:0000250" key="1"/>
<evidence type="ECO:0000255" key="2">
    <source>
        <dbReference type="HAMAP-Rule" id="MF_00100"/>
    </source>
</evidence>
<evidence type="ECO:0000256" key="3">
    <source>
        <dbReference type="SAM" id="MobiDB-lite"/>
    </source>
</evidence>
<accession>A6TEI7</accession>
<protein>
    <recommendedName>
        <fullName evidence="2">Translation initiation factor IF-2</fullName>
    </recommendedName>
</protein>
<sequence length="896" mass="98076">MTDVTIKALASEIQTSVDRLIQQFADAGIRKSADDSVTSQEKQTLLTHLNREHGSAPDKLTLQRKTRSTLNIPGTGGKSKSVQIEVRKKRTFVKRDPQEAERLAAEEQAQREAEEQARREAEEAAKREAQLKAEREAAEQAKREVADKAKREAAEKDKVSNQHTDEMTKTAQAEKIRRENEAAELKRKSEEEARRKLEEEARRVAEEARRMAEENEKNWSETSDSPEDSSDYHVTTSQHARQAEDDNDREVEGGRGRSRSSKAARPAKKGNKHAESKADREEARAAVRGGKGGKHRKGSALQQGFQKPAQAVNRDVVIGETITVGELANKMAVKGSQVIKAMMKLGAMATINQVIDQETAQLVAEEMGHKVILRRENELEEAVMSDRDTGAAAEPRAPVVTIMGHVDHGKTSLLDYIRSTKVASGEAGGITQHIGAYHVETDNGMITFLDTPGHAAFTSMRARGAQATDIVVLVVAADDGVMPQTIEAIQHAKAAQVPVVVAVNKIDKPEADPDRVKNELSQYGILPEEWGGESQFVHVSAKAGTGIDDLLDAILLQAEVLELKAVRNGMASGAVIESFLDKGRGPVATVLVREGTLHKGDIVLCGFEYGRVRAMRDELGREVLEAGPSIPVEILGLSGVPAAGDEVTVVRDEKKAREVALYRQGKFREVKLARQQKSKLENMFANMTEGEVHEVNIVLKADVQGSVEAISDSLLKLSTDEVKVKIIGSGVGGITETDATLAAASNAILVGFNVRADASARKVIEAESLDLRYYSVIYNLIDEVKAAMSGMLSPELKQQIIGLAEVRDVFKSPKFGAIAGCMVTEGTIKRHNPIRVLRDNVVIYEGELESLRRFKDDVNEVRNGMECGIGVKNYNDVRVGDMIEVFEIIEIQRSID</sequence>
<dbReference type="EMBL" id="CP000647">
    <property type="protein sequence ID" value="ABR78971.1"/>
    <property type="molecule type" value="Genomic_DNA"/>
</dbReference>
<dbReference type="RefSeq" id="WP_002918250.1">
    <property type="nucleotide sequence ID" value="NC_009648.1"/>
</dbReference>
<dbReference type="SMR" id="A6TEI7"/>
<dbReference type="STRING" id="272620.KPN_03576"/>
<dbReference type="jPOST" id="A6TEI7"/>
<dbReference type="PaxDb" id="272620-KPN_03576"/>
<dbReference type="EnsemblBacteria" id="ABR78971">
    <property type="protein sequence ID" value="ABR78971"/>
    <property type="gene ID" value="KPN_03576"/>
</dbReference>
<dbReference type="KEGG" id="kpn:KPN_03576"/>
<dbReference type="HOGENOM" id="CLU_006301_6_3_6"/>
<dbReference type="Proteomes" id="UP000000265">
    <property type="component" value="Chromosome"/>
</dbReference>
<dbReference type="GO" id="GO:0005829">
    <property type="term" value="C:cytosol"/>
    <property type="evidence" value="ECO:0007669"/>
    <property type="project" value="TreeGrafter"/>
</dbReference>
<dbReference type="GO" id="GO:0005525">
    <property type="term" value="F:GTP binding"/>
    <property type="evidence" value="ECO:0007669"/>
    <property type="project" value="UniProtKB-KW"/>
</dbReference>
<dbReference type="GO" id="GO:0003924">
    <property type="term" value="F:GTPase activity"/>
    <property type="evidence" value="ECO:0007669"/>
    <property type="project" value="UniProtKB-UniRule"/>
</dbReference>
<dbReference type="GO" id="GO:0097216">
    <property type="term" value="F:guanosine tetraphosphate binding"/>
    <property type="evidence" value="ECO:0007669"/>
    <property type="project" value="UniProtKB-ARBA"/>
</dbReference>
<dbReference type="GO" id="GO:0003743">
    <property type="term" value="F:translation initiation factor activity"/>
    <property type="evidence" value="ECO:0007669"/>
    <property type="project" value="UniProtKB-UniRule"/>
</dbReference>
<dbReference type="CDD" id="cd01887">
    <property type="entry name" value="IF2_eIF5B"/>
    <property type="match status" value="1"/>
</dbReference>
<dbReference type="CDD" id="cd03702">
    <property type="entry name" value="IF2_mtIF2_II"/>
    <property type="match status" value="1"/>
</dbReference>
<dbReference type="CDD" id="cd03692">
    <property type="entry name" value="mtIF2_IVc"/>
    <property type="match status" value="1"/>
</dbReference>
<dbReference type="FunFam" id="2.40.30.10:FF:000007">
    <property type="entry name" value="Translation initiation factor IF-2"/>
    <property type="match status" value="1"/>
</dbReference>
<dbReference type="FunFam" id="2.40.30.10:FF:000008">
    <property type="entry name" value="Translation initiation factor IF-2"/>
    <property type="match status" value="1"/>
</dbReference>
<dbReference type="FunFam" id="3.30.56.50:FF:000001">
    <property type="entry name" value="Translation initiation factor IF-2"/>
    <property type="match status" value="1"/>
</dbReference>
<dbReference type="FunFam" id="3.40.50.10050:FF:000001">
    <property type="entry name" value="Translation initiation factor IF-2"/>
    <property type="match status" value="1"/>
</dbReference>
<dbReference type="FunFam" id="3.40.50.300:FF:000019">
    <property type="entry name" value="Translation initiation factor IF-2"/>
    <property type="match status" value="1"/>
</dbReference>
<dbReference type="Gene3D" id="3.40.50.300">
    <property type="entry name" value="P-loop containing nucleotide triphosphate hydrolases"/>
    <property type="match status" value="1"/>
</dbReference>
<dbReference type="Gene3D" id="3.30.56.50">
    <property type="entry name" value="Putative DNA-binding domain, N-terminal subdomain of bacterial translation initiation factor IF2"/>
    <property type="match status" value="1"/>
</dbReference>
<dbReference type="Gene3D" id="2.40.30.10">
    <property type="entry name" value="Translation factors"/>
    <property type="match status" value="2"/>
</dbReference>
<dbReference type="Gene3D" id="3.40.50.10050">
    <property type="entry name" value="Translation initiation factor IF- 2, domain 3"/>
    <property type="match status" value="1"/>
</dbReference>
<dbReference type="HAMAP" id="MF_00100_B">
    <property type="entry name" value="IF_2_B"/>
    <property type="match status" value="1"/>
</dbReference>
<dbReference type="InterPro" id="IPR009061">
    <property type="entry name" value="DNA-bd_dom_put_sf"/>
</dbReference>
<dbReference type="InterPro" id="IPR053905">
    <property type="entry name" value="EF-G-like_DII"/>
</dbReference>
<dbReference type="InterPro" id="IPR004161">
    <property type="entry name" value="EFTu-like_2"/>
</dbReference>
<dbReference type="InterPro" id="IPR013575">
    <property type="entry name" value="IF2_assoc_dom_bac"/>
</dbReference>
<dbReference type="InterPro" id="IPR044145">
    <property type="entry name" value="IF2_II"/>
</dbReference>
<dbReference type="InterPro" id="IPR006847">
    <property type="entry name" value="IF2_N"/>
</dbReference>
<dbReference type="InterPro" id="IPR027417">
    <property type="entry name" value="P-loop_NTPase"/>
</dbReference>
<dbReference type="InterPro" id="IPR005225">
    <property type="entry name" value="Small_GTP-bd"/>
</dbReference>
<dbReference type="InterPro" id="IPR000795">
    <property type="entry name" value="T_Tr_GTP-bd_dom"/>
</dbReference>
<dbReference type="InterPro" id="IPR000178">
    <property type="entry name" value="TF_IF2_bacterial-like"/>
</dbReference>
<dbReference type="InterPro" id="IPR015760">
    <property type="entry name" value="TIF_IF2"/>
</dbReference>
<dbReference type="InterPro" id="IPR023115">
    <property type="entry name" value="TIF_IF2_dom3"/>
</dbReference>
<dbReference type="InterPro" id="IPR036925">
    <property type="entry name" value="TIF_IF2_dom3_sf"/>
</dbReference>
<dbReference type="InterPro" id="IPR009000">
    <property type="entry name" value="Transl_B-barrel_sf"/>
</dbReference>
<dbReference type="NCBIfam" id="TIGR00487">
    <property type="entry name" value="IF-2"/>
    <property type="match status" value="1"/>
</dbReference>
<dbReference type="NCBIfam" id="TIGR00231">
    <property type="entry name" value="small_GTP"/>
    <property type="match status" value="1"/>
</dbReference>
<dbReference type="PANTHER" id="PTHR43381:SF5">
    <property type="entry name" value="TR-TYPE G DOMAIN-CONTAINING PROTEIN"/>
    <property type="match status" value="1"/>
</dbReference>
<dbReference type="PANTHER" id="PTHR43381">
    <property type="entry name" value="TRANSLATION INITIATION FACTOR IF-2-RELATED"/>
    <property type="match status" value="1"/>
</dbReference>
<dbReference type="Pfam" id="PF22042">
    <property type="entry name" value="EF-G_D2"/>
    <property type="match status" value="1"/>
</dbReference>
<dbReference type="Pfam" id="PF00009">
    <property type="entry name" value="GTP_EFTU"/>
    <property type="match status" value="1"/>
</dbReference>
<dbReference type="Pfam" id="PF03144">
    <property type="entry name" value="GTP_EFTU_D2"/>
    <property type="match status" value="1"/>
</dbReference>
<dbReference type="Pfam" id="PF11987">
    <property type="entry name" value="IF-2"/>
    <property type="match status" value="1"/>
</dbReference>
<dbReference type="Pfam" id="PF08364">
    <property type="entry name" value="IF2_assoc"/>
    <property type="match status" value="1"/>
</dbReference>
<dbReference type="Pfam" id="PF04760">
    <property type="entry name" value="IF2_N"/>
    <property type="match status" value="2"/>
</dbReference>
<dbReference type="SUPFAM" id="SSF52156">
    <property type="entry name" value="Initiation factor IF2/eIF5b, domain 3"/>
    <property type="match status" value="1"/>
</dbReference>
<dbReference type="SUPFAM" id="SSF52540">
    <property type="entry name" value="P-loop containing nucleoside triphosphate hydrolases"/>
    <property type="match status" value="1"/>
</dbReference>
<dbReference type="SUPFAM" id="SSF46955">
    <property type="entry name" value="Putative DNA-binding domain"/>
    <property type="match status" value="1"/>
</dbReference>
<dbReference type="SUPFAM" id="SSF50447">
    <property type="entry name" value="Translation proteins"/>
    <property type="match status" value="2"/>
</dbReference>
<dbReference type="PROSITE" id="PS51722">
    <property type="entry name" value="G_TR_2"/>
    <property type="match status" value="1"/>
</dbReference>
<dbReference type="PROSITE" id="PS01176">
    <property type="entry name" value="IF2"/>
    <property type="match status" value="1"/>
</dbReference>